<reference key="1">
    <citation type="journal article" date="2016" name="Genome Announc.">
        <title>Complete genome sequence of Alkaliphilus metalliredigens strain QYMF, an alkaliphilic and metal-reducing bacterium isolated from borax-contaminated leachate ponds.</title>
        <authorList>
            <person name="Hwang C."/>
            <person name="Copeland A."/>
            <person name="Lucas S."/>
            <person name="Lapidus A."/>
            <person name="Barry K."/>
            <person name="Detter J.C."/>
            <person name="Glavina Del Rio T."/>
            <person name="Hammon N."/>
            <person name="Israni S."/>
            <person name="Dalin E."/>
            <person name="Tice H."/>
            <person name="Pitluck S."/>
            <person name="Chertkov O."/>
            <person name="Brettin T."/>
            <person name="Bruce D."/>
            <person name="Han C."/>
            <person name="Schmutz J."/>
            <person name="Larimer F."/>
            <person name="Land M.L."/>
            <person name="Hauser L."/>
            <person name="Kyrpides N."/>
            <person name="Mikhailova N."/>
            <person name="Ye Q."/>
            <person name="Zhou J."/>
            <person name="Richardson P."/>
            <person name="Fields M.W."/>
        </authorList>
    </citation>
    <scope>NUCLEOTIDE SEQUENCE [LARGE SCALE GENOMIC DNA]</scope>
    <source>
        <strain>QYMF</strain>
    </source>
</reference>
<organism>
    <name type="scientific">Alkaliphilus metalliredigens (strain QYMF)</name>
    <dbReference type="NCBI Taxonomy" id="293826"/>
    <lineage>
        <taxon>Bacteria</taxon>
        <taxon>Bacillati</taxon>
        <taxon>Bacillota</taxon>
        <taxon>Clostridia</taxon>
        <taxon>Peptostreptococcales</taxon>
        <taxon>Natronincolaceae</taxon>
        <taxon>Alkaliphilus</taxon>
    </lineage>
</organism>
<comment type="function">
    <text evidence="1">Binds to DNA and alters its conformation. May be involved in regulation of gene expression, nucleoid organization and DNA protection.</text>
</comment>
<comment type="subunit">
    <text evidence="1">Homodimer.</text>
</comment>
<comment type="subcellular location">
    <subcellularLocation>
        <location evidence="1">Cytoplasm</location>
        <location evidence="1">Nucleoid</location>
    </subcellularLocation>
</comment>
<comment type="similarity">
    <text evidence="1">Belongs to the YbaB/EbfC family.</text>
</comment>
<evidence type="ECO:0000255" key="1">
    <source>
        <dbReference type="HAMAP-Rule" id="MF_00274"/>
    </source>
</evidence>
<evidence type="ECO:0000256" key="2">
    <source>
        <dbReference type="SAM" id="MobiDB-lite"/>
    </source>
</evidence>
<proteinExistence type="inferred from homology"/>
<name>Y4780_ALKMQ</name>
<feature type="chain" id="PRO_1000059192" description="Nucleoid-associated protein Amet_4780">
    <location>
        <begin position="1"/>
        <end position="114"/>
    </location>
</feature>
<feature type="region of interest" description="Disordered" evidence="2">
    <location>
        <begin position="23"/>
        <end position="42"/>
    </location>
</feature>
<feature type="compositionally biased region" description="Basic and acidic residues" evidence="2">
    <location>
        <begin position="25"/>
        <end position="42"/>
    </location>
</feature>
<protein>
    <recommendedName>
        <fullName evidence="1">Nucleoid-associated protein Amet_4780</fullName>
    </recommendedName>
</protein>
<gene>
    <name type="ordered locus">Amet_4780</name>
</gene>
<keyword id="KW-0963">Cytoplasm</keyword>
<keyword id="KW-0238">DNA-binding</keyword>
<keyword id="KW-1185">Reference proteome</keyword>
<dbReference type="EMBL" id="CP000724">
    <property type="protein sequence ID" value="ABR50846.1"/>
    <property type="molecule type" value="Genomic_DNA"/>
</dbReference>
<dbReference type="RefSeq" id="WP_012065731.1">
    <property type="nucleotide sequence ID" value="NC_009633.1"/>
</dbReference>
<dbReference type="SMR" id="A6TXC8"/>
<dbReference type="STRING" id="293826.Amet_4780"/>
<dbReference type="KEGG" id="amt:Amet_4780"/>
<dbReference type="eggNOG" id="COG0718">
    <property type="taxonomic scope" value="Bacteria"/>
</dbReference>
<dbReference type="HOGENOM" id="CLU_140930_1_0_9"/>
<dbReference type="OrthoDB" id="9795263at2"/>
<dbReference type="Proteomes" id="UP000001572">
    <property type="component" value="Chromosome"/>
</dbReference>
<dbReference type="GO" id="GO:0043590">
    <property type="term" value="C:bacterial nucleoid"/>
    <property type="evidence" value="ECO:0007669"/>
    <property type="project" value="UniProtKB-UniRule"/>
</dbReference>
<dbReference type="GO" id="GO:0005829">
    <property type="term" value="C:cytosol"/>
    <property type="evidence" value="ECO:0007669"/>
    <property type="project" value="TreeGrafter"/>
</dbReference>
<dbReference type="GO" id="GO:0003677">
    <property type="term" value="F:DNA binding"/>
    <property type="evidence" value="ECO:0007669"/>
    <property type="project" value="UniProtKB-UniRule"/>
</dbReference>
<dbReference type="FunFam" id="3.30.1310.10:FF:000002">
    <property type="entry name" value="Nucleoid-associated protein IKC_06587"/>
    <property type="match status" value="1"/>
</dbReference>
<dbReference type="Gene3D" id="3.30.1310.10">
    <property type="entry name" value="Nucleoid-associated protein YbaB-like domain"/>
    <property type="match status" value="1"/>
</dbReference>
<dbReference type="HAMAP" id="MF_00274">
    <property type="entry name" value="DNA_YbaB_EbfC"/>
    <property type="match status" value="1"/>
</dbReference>
<dbReference type="InterPro" id="IPR036894">
    <property type="entry name" value="YbaB-like_sf"/>
</dbReference>
<dbReference type="InterPro" id="IPR004401">
    <property type="entry name" value="YbaB/EbfC"/>
</dbReference>
<dbReference type="NCBIfam" id="TIGR00103">
    <property type="entry name" value="DNA_YbaB_EbfC"/>
    <property type="match status" value="1"/>
</dbReference>
<dbReference type="PANTHER" id="PTHR33449">
    <property type="entry name" value="NUCLEOID-ASSOCIATED PROTEIN YBAB"/>
    <property type="match status" value="1"/>
</dbReference>
<dbReference type="PANTHER" id="PTHR33449:SF1">
    <property type="entry name" value="NUCLEOID-ASSOCIATED PROTEIN YBAB"/>
    <property type="match status" value="1"/>
</dbReference>
<dbReference type="Pfam" id="PF02575">
    <property type="entry name" value="YbaB_DNA_bd"/>
    <property type="match status" value="1"/>
</dbReference>
<dbReference type="PIRSF" id="PIRSF004555">
    <property type="entry name" value="UCP004555"/>
    <property type="match status" value="1"/>
</dbReference>
<dbReference type="SUPFAM" id="SSF82607">
    <property type="entry name" value="YbaB-like"/>
    <property type="match status" value="1"/>
</dbReference>
<sequence length="114" mass="12202">MAKKGFPGMGGAPNMNNMMKQVQKMQKDMEKTQAALEEKEVEASAGGGAITVKVSGKKEVISIEIKPEVVDPEDVEMLQDLIMAAVNEAMRGAEEMVSKEMGKVTGGMNIPGLF</sequence>
<accession>A6TXC8</accession>